<proteinExistence type="inferred from homology"/>
<accession>A2C1N4</accession>
<gene>
    <name evidence="1" type="primary">hisA</name>
    <name type="ordered locus">NATL1_08361</name>
</gene>
<evidence type="ECO:0000255" key="1">
    <source>
        <dbReference type="HAMAP-Rule" id="MF_01014"/>
    </source>
</evidence>
<keyword id="KW-0028">Amino-acid biosynthesis</keyword>
<keyword id="KW-0963">Cytoplasm</keyword>
<keyword id="KW-0368">Histidine biosynthesis</keyword>
<keyword id="KW-0413">Isomerase</keyword>
<reference key="1">
    <citation type="journal article" date="2007" name="PLoS Genet.">
        <title>Patterns and implications of gene gain and loss in the evolution of Prochlorococcus.</title>
        <authorList>
            <person name="Kettler G.C."/>
            <person name="Martiny A.C."/>
            <person name="Huang K."/>
            <person name="Zucker J."/>
            <person name="Coleman M.L."/>
            <person name="Rodrigue S."/>
            <person name="Chen F."/>
            <person name="Lapidus A."/>
            <person name="Ferriera S."/>
            <person name="Johnson J."/>
            <person name="Steglich C."/>
            <person name="Church G.M."/>
            <person name="Richardson P."/>
            <person name="Chisholm S.W."/>
        </authorList>
    </citation>
    <scope>NUCLEOTIDE SEQUENCE [LARGE SCALE GENOMIC DNA]</scope>
    <source>
        <strain>NATL1A</strain>
    </source>
</reference>
<dbReference type="EC" id="5.3.1.16" evidence="1"/>
<dbReference type="EMBL" id="CP000553">
    <property type="protein sequence ID" value="ABM75394.1"/>
    <property type="molecule type" value="Genomic_DNA"/>
</dbReference>
<dbReference type="RefSeq" id="WP_011823540.1">
    <property type="nucleotide sequence ID" value="NC_008819.1"/>
</dbReference>
<dbReference type="SMR" id="A2C1N4"/>
<dbReference type="KEGG" id="pme:NATL1_08361"/>
<dbReference type="eggNOG" id="COG0106">
    <property type="taxonomic scope" value="Bacteria"/>
</dbReference>
<dbReference type="HOGENOM" id="CLU_048577_1_1_3"/>
<dbReference type="UniPathway" id="UPA00031">
    <property type="reaction ID" value="UER00009"/>
</dbReference>
<dbReference type="Proteomes" id="UP000002592">
    <property type="component" value="Chromosome"/>
</dbReference>
<dbReference type="GO" id="GO:0005737">
    <property type="term" value="C:cytoplasm"/>
    <property type="evidence" value="ECO:0007669"/>
    <property type="project" value="UniProtKB-SubCell"/>
</dbReference>
<dbReference type="GO" id="GO:0003949">
    <property type="term" value="F:1-(5-phosphoribosyl)-5-[(5-phosphoribosylamino)methylideneamino]imidazole-4-carboxamide isomerase activity"/>
    <property type="evidence" value="ECO:0007669"/>
    <property type="project" value="UniProtKB-UniRule"/>
</dbReference>
<dbReference type="GO" id="GO:0000105">
    <property type="term" value="P:L-histidine biosynthetic process"/>
    <property type="evidence" value="ECO:0007669"/>
    <property type="project" value="UniProtKB-UniRule"/>
</dbReference>
<dbReference type="GO" id="GO:0000162">
    <property type="term" value="P:L-tryptophan biosynthetic process"/>
    <property type="evidence" value="ECO:0007669"/>
    <property type="project" value="TreeGrafter"/>
</dbReference>
<dbReference type="CDD" id="cd04732">
    <property type="entry name" value="HisA"/>
    <property type="match status" value="1"/>
</dbReference>
<dbReference type="FunFam" id="3.20.20.70:FF:000009">
    <property type="entry name" value="1-(5-phosphoribosyl)-5-[(5-phosphoribosylamino)methylideneamino] imidazole-4-carboxamide isomerase"/>
    <property type="match status" value="1"/>
</dbReference>
<dbReference type="Gene3D" id="3.20.20.70">
    <property type="entry name" value="Aldolase class I"/>
    <property type="match status" value="1"/>
</dbReference>
<dbReference type="HAMAP" id="MF_01014">
    <property type="entry name" value="HisA"/>
    <property type="match status" value="1"/>
</dbReference>
<dbReference type="InterPro" id="IPR013785">
    <property type="entry name" value="Aldolase_TIM"/>
</dbReference>
<dbReference type="InterPro" id="IPR006062">
    <property type="entry name" value="His_biosynth"/>
</dbReference>
<dbReference type="InterPro" id="IPR006063">
    <property type="entry name" value="HisA_bact_arch"/>
</dbReference>
<dbReference type="InterPro" id="IPR044524">
    <property type="entry name" value="Isoase_HisA-like"/>
</dbReference>
<dbReference type="InterPro" id="IPR023016">
    <property type="entry name" value="Isoase_HisA-like_bact"/>
</dbReference>
<dbReference type="InterPro" id="IPR011060">
    <property type="entry name" value="RibuloseP-bd_barrel"/>
</dbReference>
<dbReference type="NCBIfam" id="TIGR00007">
    <property type="entry name" value="1-(5-phosphoribosyl)-5-[(5-phosphoribosylamino)methylideneamino]imidazole-4-carboxamide isomerase"/>
    <property type="match status" value="1"/>
</dbReference>
<dbReference type="PANTHER" id="PTHR43090">
    <property type="entry name" value="1-(5-PHOSPHORIBOSYL)-5-[(5-PHOSPHORIBOSYLAMINO)METHYLIDENEAMINO] IMIDAZOLE-4-CARBOXAMIDE ISOMERASE"/>
    <property type="match status" value="1"/>
</dbReference>
<dbReference type="PANTHER" id="PTHR43090:SF2">
    <property type="entry name" value="1-(5-PHOSPHORIBOSYL)-5-[(5-PHOSPHORIBOSYLAMINO)METHYLIDENEAMINO] IMIDAZOLE-4-CARBOXAMIDE ISOMERASE"/>
    <property type="match status" value="1"/>
</dbReference>
<dbReference type="Pfam" id="PF00977">
    <property type="entry name" value="His_biosynth"/>
    <property type="match status" value="1"/>
</dbReference>
<dbReference type="SUPFAM" id="SSF51366">
    <property type="entry name" value="Ribulose-phoshate binding barrel"/>
    <property type="match status" value="1"/>
</dbReference>
<comment type="catalytic activity">
    <reaction evidence="1">
        <text>1-(5-phospho-beta-D-ribosyl)-5-[(5-phospho-beta-D-ribosylamino)methylideneamino]imidazole-4-carboxamide = 5-[(5-phospho-1-deoxy-D-ribulos-1-ylimino)methylamino]-1-(5-phospho-beta-D-ribosyl)imidazole-4-carboxamide</text>
        <dbReference type="Rhea" id="RHEA:15469"/>
        <dbReference type="ChEBI" id="CHEBI:58435"/>
        <dbReference type="ChEBI" id="CHEBI:58525"/>
        <dbReference type="EC" id="5.3.1.16"/>
    </reaction>
</comment>
<comment type="pathway">
    <text evidence="1">Amino-acid biosynthesis; L-histidine biosynthesis; L-histidine from 5-phospho-alpha-D-ribose 1-diphosphate: step 4/9.</text>
</comment>
<comment type="subcellular location">
    <subcellularLocation>
        <location evidence="1">Cytoplasm</location>
    </subcellularLocation>
</comment>
<comment type="similarity">
    <text evidence="1">Belongs to the HisA/HisF family.</text>
</comment>
<organism>
    <name type="scientific">Prochlorococcus marinus (strain NATL1A)</name>
    <dbReference type="NCBI Taxonomy" id="167555"/>
    <lineage>
        <taxon>Bacteria</taxon>
        <taxon>Bacillati</taxon>
        <taxon>Cyanobacteriota</taxon>
        <taxon>Cyanophyceae</taxon>
        <taxon>Synechococcales</taxon>
        <taxon>Prochlorococcaceae</taxon>
        <taxon>Prochlorococcus</taxon>
    </lineage>
</organism>
<feature type="chain" id="PRO_0000290511" description="1-(5-phosphoribosyl)-5-[(5-phosphoribosylamino)methylideneamino] imidazole-4-carboxamide isomerase">
    <location>
        <begin position="1"/>
        <end position="256"/>
    </location>
</feature>
<feature type="active site" description="Proton acceptor" evidence="1">
    <location>
        <position position="8"/>
    </location>
</feature>
<feature type="active site" description="Proton donor" evidence="1">
    <location>
        <position position="129"/>
    </location>
</feature>
<sequence>MEIIPAIDLLNGKCVRLNQGNYNEVTKFNSDPVKQAQIWESKGAKRLHLVDLDGAKTGEPINDLTIKEIKKSITIPIQLGGGIRSIDRAKELFDIGIDRIILGTIAIEKPELVKDLSKEYPKRVAVGIDAKEGMVATRGWLKQSKISSLDLAKQLNDLDLAAIISTDIATDGTLKGPNVQALREIAEISINPVIASGGIGSIADLISLADFADEGIEGIIVGRALYDGSIDLKEAILTLKNLLLQDAFNEKDKFLV</sequence>
<protein>
    <recommendedName>
        <fullName evidence="1">1-(5-phosphoribosyl)-5-[(5-phosphoribosylamino)methylideneamino] imidazole-4-carboxamide isomerase</fullName>
        <ecNumber evidence="1">5.3.1.16</ecNumber>
    </recommendedName>
    <alternativeName>
        <fullName evidence="1">Phosphoribosylformimino-5-aminoimidazole carboxamide ribotide isomerase</fullName>
    </alternativeName>
</protein>
<name>HIS4_PROM1</name>